<accession>P11121</accession>
<feature type="initiator methionine" description="Removed" evidence="3">
    <location>
        <position position="1"/>
    </location>
</feature>
<feature type="chain" id="PRO_0000198266" description="Calmodulin">
    <location>
        <begin position="2"/>
        <end position="149"/>
    </location>
</feature>
<feature type="domain" description="EF-hand 1" evidence="2">
    <location>
        <begin position="8"/>
        <end position="43"/>
    </location>
</feature>
<feature type="domain" description="EF-hand 2" evidence="2">
    <location>
        <begin position="44"/>
        <end position="79"/>
    </location>
</feature>
<feature type="domain" description="EF-hand 3" evidence="2">
    <location>
        <begin position="81"/>
        <end position="116"/>
    </location>
</feature>
<feature type="domain" description="EF-hand 4" evidence="2">
    <location>
        <begin position="117"/>
        <end position="149"/>
    </location>
</feature>
<feature type="binding site" evidence="2">
    <location>
        <position position="21"/>
    </location>
    <ligand>
        <name>Ca(2+)</name>
        <dbReference type="ChEBI" id="CHEBI:29108"/>
        <label>1</label>
    </ligand>
</feature>
<feature type="binding site" evidence="2">
    <location>
        <position position="23"/>
    </location>
    <ligand>
        <name>Ca(2+)</name>
        <dbReference type="ChEBI" id="CHEBI:29108"/>
        <label>1</label>
    </ligand>
</feature>
<feature type="binding site" evidence="2">
    <location>
        <position position="25"/>
    </location>
    <ligand>
        <name>Ca(2+)</name>
        <dbReference type="ChEBI" id="CHEBI:29108"/>
        <label>1</label>
    </ligand>
</feature>
<feature type="binding site" evidence="2">
    <location>
        <position position="27"/>
    </location>
    <ligand>
        <name>Ca(2+)</name>
        <dbReference type="ChEBI" id="CHEBI:29108"/>
        <label>1</label>
    </ligand>
</feature>
<feature type="binding site" evidence="2">
    <location>
        <position position="32"/>
    </location>
    <ligand>
        <name>Ca(2+)</name>
        <dbReference type="ChEBI" id="CHEBI:29108"/>
        <label>1</label>
    </ligand>
</feature>
<feature type="binding site" evidence="2">
    <location>
        <position position="57"/>
    </location>
    <ligand>
        <name>Ca(2+)</name>
        <dbReference type="ChEBI" id="CHEBI:29108"/>
        <label>2</label>
    </ligand>
</feature>
<feature type="binding site" evidence="2">
    <location>
        <position position="59"/>
    </location>
    <ligand>
        <name>Ca(2+)</name>
        <dbReference type="ChEBI" id="CHEBI:29108"/>
        <label>2</label>
    </ligand>
</feature>
<feature type="binding site" evidence="2">
    <location>
        <position position="61"/>
    </location>
    <ligand>
        <name>Ca(2+)</name>
        <dbReference type="ChEBI" id="CHEBI:29108"/>
        <label>2</label>
    </ligand>
</feature>
<feature type="binding site" evidence="2">
    <location>
        <position position="63"/>
    </location>
    <ligand>
        <name>Ca(2+)</name>
        <dbReference type="ChEBI" id="CHEBI:29108"/>
        <label>2</label>
    </ligand>
</feature>
<feature type="binding site" evidence="2">
    <location>
        <position position="68"/>
    </location>
    <ligand>
        <name>Ca(2+)</name>
        <dbReference type="ChEBI" id="CHEBI:29108"/>
        <label>2</label>
    </ligand>
</feature>
<feature type="binding site" evidence="2">
    <location>
        <position position="94"/>
    </location>
    <ligand>
        <name>Ca(2+)</name>
        <dbReference type="ChEBI" id="CHEBI:29108"/>
        <label>3</label>
    </ligand>
</feature>
<feature type="binding site" evidence="2">
    <location>
        <position position="96"/>
    </location>
    <ligand>
        <name>Ca(2+)</name>
        <dbReference type="ChEBI" id="CHEBI:29108"/>
        <label>3</label>
    </ligand>
</feature>
<feature type="binding site" evidence="2">
    <location>
        <position position="98"/>
    </location>
    <ligand>
        <name>Ca(2+)</name>
        <dbReference type="ChEBI" id="CHEBI:29108"/>
        <label>3</label>
    </ligand>
</feature>
<feature type="binding site" evidence="2">
    <location>
        <position position="105"/>
    </location>
    <ligand>
        <name>Ca(2+)</name>
        <dbReference type="ChEBI" id="CHEBI:29108"/>
        <label>3</label>
    </ligand>
</feature>
<feature type="binding site" evidence="2">
    <location>
        <position position="130"/>
    </location>
    <ligand>
        <name>Ca(2+)</name>
        <dbReference type="ChEBI" id="CHEBI:29108"/>
        <label>4</label>
    </ligand>
</feature>
<feature type="binding site" evidence="2">
    <location>
        <position position="132"/>
    </location>
    <ligand>
        <name>Ca(2+)</name>
        <dbReference type="ChEBI" id="CHEBI:29108"/>
        <label>4</label>
    </ligand>
</feature>
<feature type="binding site" evidence="2">
    <location>
        <position position="134"/>
    </location>
    <ligand>
        <name>Ca(2+)</name>
        <dbReference type="ChEBI" id="CHEBI:29108"/>
        <label>4</label>
    </ligand>
</feature>
<feature type="binding site" evidence="2">
    <location>
        <position position="136"/>
    </location>
    <ligand>
        <name>Ca(2+)</name>
        <dbReference type="ChEBI" id="CHEBI:29108"/>
        <label>4</label>
    </ligand>
</feature>
<feature type="binding site" evidence="2">
    <location>
        <position position="141"/>
    </location>
    <ligand>
        <name>Ca(2+)</name>
        <dbReference type="ChEBI" id="CHEBI:29108"/>
        <label>4</label>
    </ligand>
</feature>
<feature type="modified residue" description="N-acetylalanine" evidence="1">
    <location>
        <position position="2"/>
    </location>
</feature>
<feature type="modified residue" description="N6,N6,N6-trimethyllysine" evidence="1">
    <location>
        <position position="116"/>
    </location>
</feature>
<protein>
    <recommendedName>
        <fullName>Calmodulin</fullName>
        <shortName>CaM</shortName>
    </recommendedName>
</protein>
<organism>
    <name type="scientific">Pyuridae sp.</name>
    <name type="common">Sea squirt</name>
    <dbReference type="NCBI Taxonomy" id="7734"/>
    <lineage>
        <taxon>Eukaryota</taxon>
        <taxon>Metazoa</taxon>
        <taxon>Chordata</taxon>
        <taxon>Tunicata</taxon>
        <taxon>Ascidiacea</taxon>
        <taxon>Stolidobranchia</taxon>
        <taxon>Pyuridae</taxon>
    </lineage>
</organism>
<reference key="1">
    <citation type="submission" date="1988-05" db="PIR data bank">
        <authorList>
            <person name="Yazawa M."/>
            <person name="Toda H."/>
            <person name="Sakiyama F."/>
            <person name="Yagi K."/>
        </authorList>
    </citation>
    <scope>PROTEIN SEQUENCE OF 2-149</scope>
</reference>
<proteinExistence type="evidence at protein level"/>
<keyword id="KW-0007">Acetylation</keyword>
<keyword id="KW-0106">Calcium</keyword>
<keyword id="KW-0903">Direct protein sequencing</keyword>
<keyword id="KW-0479">Metal-binding</keyword>
<keyword id="KW-0488">Methylation</keyword>
<keyword id="KW-0677">Repeat</keyword>
<name>CALM_PYUSP</name>
<sequence length="149" mass="16812">MADQLTEEQIAEFKEAFSLFDKDGDGTITTKELGTVMRSLGQNPTEAELQDMINEVDADGDGTIDFPEFLTMMARKMKDTDSEEEIREAFRVFDKDGNGFISAAELRHVMTNLGEKLTDEEVDEMIREADIDGDGQVNYEEFVTMMTSK</sequence>
<evidence type="ECO:0000250" key="1">
    <source>
        <dbReference type="UniProtKB" id="Q95NR9"/>
    </source>
</evidence>
<evidence type="ECO:0000255" key="2">
    <source>
        <dbReference type="PROSITE-ProRule" id="PRU00448"/>
    </source>
</evidence>
<evidence type="ECO:0000269" key="3">
    <source ref="1"/>
</evidence>
<evidence type="ECO:0000305" key="4"/>
<comment type="function">
    <text>Calmodulin mediates the control of a large number of enzymes, ion channels and other proteins by Ca(2+). Among the enzymes to be stimulated by the calmodulin-Ca(2+) complex are a number of protein kinases and phosphatases.</text>
</comment>
<comment type="miscellaneous">
    <text>This protein has four functional calcium-binding sites.</text>
</comment>
<comment type="similarity">
    <text evidence="4">Belongs to the calmodulin family.</text>
</comment>
<dbReference type="BMRB" id="P11121"/>
<dbReference type="SMR" id="P11121"/>
<dbReference type="GO" id="GO:0016460">
    <property type="term" value="C:myosin II complex"/>
    <property type="evidence" value="ECO:0007669"/>
    <property type="project" value="TreeGrafter"/>
</dbReference>
<dbReference type="GO" id="GO:0005509">
    <property type="term" value="F:calcium ion binding"/>
    <property type="evidence" value="ECO:0007669"/>
    <property type="project" value="InterPro"/>
</dbReference>
<dbReference type="CDD" id="cd00051">
    <property type="entry name" value="EFh"/>
    <property type="match status" value="2"/>
</dbReference>
<dbReference type="FunFam" id="1.10.238.10:FF:000527">
    <property type="entry name" value="Calmodulin-3"/>
    <property type="match status" value="1"/>
</dbReference>
<dbReference type="Gene3D" id="1.10.238.10">
    <property type="entry name" value="EF-hand"/>
    <property type="match status" value="3"/>
</dbReference>
<dbReference type="InterPro" id="IPR050230">
    <property type="entry name" value="CALM/Myosin/TropC-like"/>
</dbReference>
<dbReference type="InterPro" id="IPR011992">
    <property type="entry name" value="EF-hand-dom_pair"/>
</dbReference>
<dbReference type="InterPro" id="IPR018247">
    <property type="entry name" value="EF_Hand_1_Ca_BS"/>
</dbReference>
<dbReference type="InterPro" id="IPR002048">
    <property type="entry name" value="EF_hand_dom"/>
</dbReference>
<dbReference type="PANTHER" id="PTHR23048:SF0">
    <property type="entry name" value="CALMODULIN LIKE 3"/>
    <property type="match status" value="1"/>
</dbReference>
<dbReference type="PANTHER" id="PTHR23048">
    <property type="entry name" value="MYOSIN LIGHT CHAIN 1, 3"/>
    <property type="match status" value="1"/>
</dbReference>
<dbReference type="Pfam" id="PF13499">
    <property type="entry name" value="EF-hand_7"/>
    <property type="match status" value="2"/>
</dbReference>
<dbReference type="PRINTS" id="PR00450">
    <property type="entry name" value="RECOVERIN"/>
</dbReference>
<dbReference type="SMART" id="SM00054">
    <property type="entry name" value="EFh"/>
    <property type="match status" value="4"/>
</dbReference>
<dbReference type="SUPFAM" id="SSF47473">
    <property type="entry name" value="EF-hand"/>
    <property type="match status" value="1"/>
</dbReference>
<dbReference type="PROSITE" id="PS00018">
    <property type="entry name" value="EF_HAND_1"/>
    <property type="match status" value="4"/>
</dbReference>
<dbReference type="PROSITE" id="PS50222">
    <property type="entry name" value="EF_HAND_2"/>
    <property type="match status" value="4"/>
</dbReference>